<organism>
    <name type="scientific">Lactococcus lactis subsp. cremoris (strain MG1363)</name>
    <dbReference type="NCBI Taxonomy" id="416870"/>
    <lineage>
        <taxon>Bacteria</taxon>
        <taxon>Bacillati</taxon>
        <taxon>Bacillota</taxon>
        <taxon>Bacilli</taxon>
        <taxon>Lactobacillales</taxon>
        <taxon>Streptococcaceae</taxon>
        <taxon>Lactococcus</taxon>
        <taxon>Lactococcus cremoris subsp. cremoris</taxon>
    </lineage>
</organism>
<feature type="chain" id="PRO_0000260797" description="UPF0397 protein llmg_0343">
    <location>
        <begin position="1"/>
        <end position="182"/>
    </location>
</feature>
<feature type="transmembrane region" description="Helical" evidence="1">
    <location>
        <begin position="8"/>
        <end position="28"/>
    </location>
</feature>
<feature type="transmembrane region" description="Helical" evidence="1">
    <location>
        <begin position="42"/>
        <end position="62"/>
    </location>
</feature>
<feature type="transmembrane region" description="Helical" evidence="1">
    <location>
        <begin position="74"/>
        <end position="94"/>
    </location>
</feature>
<feature type="transmembrane region" description="Helical" evidence="1">
    <location>
        <begin position="114"/>
        <end position="134"/>
    </location>
</feature>
<feature type="transmembrane region" description="Helical" evidence="1">
    <location>
        <begin position="146"/>
        <end position="166"/>
    </location>
</feature>
<gene>
    <name type="ordered locus">llmg_0343</name>
</gene>
<protein>
    <recommendedName>
        <fullName evidence="1">UPF0397 protein llmg_0343</fullName>
    </recommendedName>
</protein>
<reference key="1">
    <citation type="journal article" date="2007" name="J. Bacteriol.">
        <title>The complete genome sequence of the lactic acid bacterial paradigm Lactococcus lactis subsp. cremoris MG1363.</title>
        <authorList>
            <person name="Wegmann U."/>
            <person name="O'Connell-Motherway M."/>
            <person name="Zomer A."/>
            <person name="Buist G."/>
            <person name="Shearman C."/>
            <person name="Canchaya C."/>
            <person name="Ventura M."/>
            <person name="Goesmann A."/>
            <person name="Gasson M.J."/>
            <person name="Kuipers O.P."/>
            <person name="van Sinderen D."/>
            <person name="Kok J."/>
        </authorList>
    </citation>
    <scope>NUCLEOTIDE SEQUENCE [LARGE SCALE GENOMIC DNA]</scope>
    <source>
        <strain>MG1363</strain>
    </source>
</reference>
<comment type="subcellular location">
    <subcellularLocation>
        <location evidence="1">Cell membrane</location>
        <topology evidence="1">Multi-pass membrane protein</topology>
    </subcellularLocation>
</comment>
<comment type="similarity">
    <text evidence="1">Belongs to the UPF0397 family.</text>
</comment>
<name>Y343_LACLM</name>
<accession>P0CI37</accession>
<accession>A2RI55</accession>
<accession>Q9RLV3</accession>
<proteinExistence type="inferred from homology"/>
<evidence type="ECO:0000255" key="1">
    <source>
        <dbReference type="HAMAP-Rule" id="MF_01572"/>
    </source>
</evidence>
<keyword id="KW-1003">Cell membrane</keyword>
<keyword id="KW-0472">Membrane</keyword>
<keyword id="KW-0812">Transmembrane</keyword>
<keyword id="KW-1133">Transmembrane helix</keyword>
<dbReference type="EMBL" id="AM406671">
    <property type="protein sequence ID" value="CAL96948.1"/>
    <property type="molecule type" value="Genomic_DNA"/>
</dbReference>
<dbReference type="RefSeq" id="WP_011834403.1">
    <property type="nucleotide sequence ID" value="NC_009004.1"/>
</dbReference>
<dbReference type="STRING" id="416870.llmg_0343"/>
<dbReference type="GeneID" id="61108646"/>
<dbReference type="KEGG" id="llm:llmg_0343"/>
<dbReference type="eggNOG" id="COG4720">
    <property type="taxonomic scope" value="Bacteria"/>
</dbReference>
<dbReference type="HOGENOM" id="CLU_120023_0_0_9"/>
<dbReference type="OrthoDB" id="4550662at2"/>
<dbReference type="PhylomeDB" id="P0CI37"/>
<dbReference type="Proteomes" id="UP000000364">
    <property type="component" value="Chromosome"/>
</dbReference>
<dbReference type="GO" id="GO:0005886">
    <property type="term" value="C:plasma membrane"/>
    <property type="evidence" value="ECO:0007669"/>
    <property type="project" value="UniProtKB-SubCell"/>
</dbReference>
<dbReference type="Gene3D" id="1.10.1760.20">
    <property type="match status" value="1"/>
</dbReference>
<dbReference type="HAMAP" id="MF_01572">
    <property type="entry name" value="UPF0397"/>
    <property type="match status" value="1"/>
</dbReference>
<dbReference type="InterPro" id="IPR009825">
    <property type="entry name" value="ECF_substrate-spec-like"/>
</dbReference>
<dbReference type="InterPro" id="IPR022914">
    <property type="entry name" value="UPF0397"/>
</dbReference>
<dbReference type="NCBIfam" id="NF010182">
    <property type="entry name" value="PRK13661.1"/>
    <property type="match status" value="1"/>
</dbReference>
<dbReference type="PANTHER" id="PTHR37815">
    <property type="entry name" value="UPF0397 PROTEIN BC_2624-RELATED"/>
    <property type="match status" value="1"/>
</dbReference>
<dbReference type="PANTHER" id="PTHR37815:SF3">
    <property type="entry name" value="UPF0397 PROTEIN SPR0429"/>
    <property type="match status" value="1"/>
</dbReference>
<dbReference type="Pfam" id="PF07155">
    <property type="entry name" value="ECF-ribofla_trS"/>
    <property type="match status" value="1"/>
</dbReference>
<sequence length="182" mass="19436">MKNNSVKIVVATGIGAALFVIIGWLINIPTPIPNTSIQLQYAVLALFSALFGPLAGFLIGFIGHALKDSFLYGAPWWTWVLGSGLMGLFLGFGVKRESLTQGIFGNKEIIRFNIVQFLANVVVWGLIAPIGDILVYSEPANKVFTQGVVAGLVNALTIAVAGTLLLKLYAATRTKSGTLDKE</sequence>